<organism>
    <name type="scientific">Homo sapiens</name>
    <name type="common">Human</name>
    <dbReference type="NCBI Taxonomy" id="9606"/>
    <lineage>
        <taxon>Eukaryota</taxon>
        <taxon>Metazoa</taxon>
        <taxon>Chordata</taxon>
        <taxon>Craniata</taxon>
        <taxon>Vertebrata</taxon>
        <taxon>Euteleostomi</taxon>
        <taxon>Mammalia</taxon>
        <taxon>Eutheria</taxon>
        <taxon>Euarchontoglires</taxon>
        <taxon>Primates</taxon>
        <taxon>Haplorrhini</taxon>
        <taxon>Catarrhini</taxon>
        <taxon>Hominidae</taxon>
        <taxon>Homo</taxon>
    </lineage>
</organism>
<dbReference type="EMBL" id="AF474376">
    <property type="protein sequence ID" value="AAL83289.1"/>
    <property type="status" value="ALT_SEQ"/>
    <property type="molecule type" value="mRNA"/>
</dbReference>
<dbReference type="EMBL" id="AY578060">
    <property type="protein sequence ID" value="AAS90299.1"/>
    <property type="molecule type" value="mRNA"/>
</dbReference>
<dbReference type="EMBL" id="AY578061">
    <property type="protein sequence ID" value="AAS90300.1"/>
    <property type="molecule type" value="mRNA"/>
</dbReference>
<dbReference type="EMBL" id="AY578062">
    <property type="protein sequence ID" value="AAS90301.1"/>
    <property type="molecule type" value="mRNA"/>
</dbReference>
<dbReference type="EMBL" id="AY578063">
    <property type="protein sequence ID" value="AAS90302.1"/>
    <property type="status" value="ALT_SEQ"/>
    <property type="molecule type" value="mRNA"/>
</dbReference>
<dbReference type="EMBL" id="AK021868">
    <property type="status" value="NOT_ANNOTATED_CDS"/>
    <property type="molecule type" value="mRNA"/>
</dbReference>
<dbReference type="EMBL" id="AK302136">
    <property type="protein sequence ID" value="BAG63510.1"/>
    <property type="molecule type" value="mRNA"/>
</dbReference>
<dbReference type="EMBL" id="AK303123">
    <property type="protein sequence ID" value="BAG64229.1"/>
    <property type="molecule type" value="mRNA"/>
</dbReference>
<dbReference type="EMBL" id="AK304275">
    <property type="protein sequence ID" value="BAG65136.1"/>
    <property type="molecule type" value="mRNA"/>
</dbReference>
<dbReference type="EMBL" id="AL834215">
    <property type="protein sequence ID" value="CAD38897.1"/>
    <property type="molecule type" value="mRNA"/>
</dbReference>
<dbReference type="EMBL" id="BX640716">
    <property type="protein sequence ID" value="CAE45835.1"/>
    <property type="molecule type" value="mRNA"/>
</dbReference>
<dbReference type="EMBL" id="BX640876">
    <property type="protein sequence ID" value="CAE45933.1"/>
    <property type="status" value="ALT_SEQ"/>
    <property type="molecule type" value="mRNA"/>
</dbReference>
<dbReference type="EMBL" id="AL162171">
    <property type="status" value="NOT_ANNOTATED_CDS"/>
    <property type="molecule type" value="Genomic_DNA"/>
</dbReference>
<dbReference type="EMBL" id="CH471061">
    <property type="protein sequence ID" value="EAW81385.1"/>
    <property type="molecule type" value="Genomic_DNA"/>
</dbReference>
<dbReference type="EMBL" id="CH471061">
    <property type="protein sequence ID" value="EAW81388.1"/>
    <property type="molecule type" value="Genomic_DNA"/>
</dbReference>
<dbReference type="EMBL" id="CH471061">
    <property type="protein sequence ID" value="EAW81389.1"/>
    <property type="molecule type" value="Genomic_DNA"/>
</dbReference>
<dbReference type="EMBL" id="CH471061">
    <property type="protein sequence ID" value="EAW81390.1"/>
    <property type="molecule type" value="Genomic_DNA"/>
</dbReference>
<dbReference type="EMBL" id="BC011793">
    <property type="protein sequence ID" value="AAH11793.1"/>
    <property type="molecule type" value="mRNA"/>
</dbReference>
<dbReference type="EMBL" id="BC023641">
    <property type="protein sequence ID" value="AAH23641.1"/>
    <property type="molecule type" value="mRNA"/>
</dbReference>
<dbReference type="EMBL" id="BC027607">
    <property type="protein sequence ID" value="AAH27607.1"/>
    <property type="molecule type" value="mRNA"/>
</dbReference>
<dbReference type="EMBL" id="BX248265">
    <property type="protein sequence ID" value="CAD62593.1"/>
    <property type="molecule type" value="mRNA"/>
</dbReference>
<dbReference type="EMBL" id="BX248281">
    <property type="protein sequence ID" value="CAD62609.1"/>
    <property type="molecule type" value="mRNA"/>
</dbReference>
<dbReference type="EMBL" id="BX248769">
    <property type="protein sequence ID" value="CAD66576.1"/>
    <property type="molecule type" value="mRNA"/>
</dbReference>
<dbReference type="EMBL" id="AF155107">
    <property type="protein sequence ID" value="AAD42873.1"/>
    <property type="molecule type" value="mRNA"/>
</dbReference>
<dbReference type="CCDS" id="CCDS32133.1">
    <molecule id="Q6PJT7-1"/>
</dbReference>
<dbReference type="CCDS" id="CCDS32134.1">
    <molecule id="Q6PJT7-3"/>
</dbReference>
<dbReference type="CCDS" id="CCDS32135.1">
    <molecule id="Q6PJT7-4"/>
</dbReference>
<dbReference type="CCDS" id="CCDS32136.1">
    <molecule id="Q6PJT7-6"/>
</dbReference>
<dbReference type="CCDS" id="CCDS55938.1">
    <molecule id="Q6PJT7-9"/>
</dbReference>
<dbReference type="CCDS" id="CCDS86418.1">
    <molecule id="Q6PJT7-5"/>
</dbReference>
<dbReference type="RefSeq" id="NP_001153575.1">
    <molecule id="Q6PJT7-2"/>
    <property type="nucleotide sequence ID" value="NM_001160103.2"/>
</dbReference>
<dbReference type="RefSeq" id="NP_001153576.1">
    <molecule id="Q6PJT7-9"/>
    <property type="nucleotide sequence ID" value="NM_001160104.2"/>
</dbReference>
<dbReference type="RefSeq" id="NP_001313236.1">
    <molecule id="Q6PJT7-5"/>
    <property type="nucleotide sequence ID" value="NM_001326307.2"/>
</dbReference>
<dbReference type="RefSeq" id="NP_079100.2">
    <molecule id="Q6PJT7-1"/>
    <property type="nucleotide sequence ID" value="NM_024824.4"/>
</dbReference>
<dbReference type="RefSeq" id="NP_997543.1">
    <molecule id="Q6PJT7-3"/>
    <property type="nucleotide sequence ID" value="NM_207660.4"/>
</dbReference>
<dbReference type="RefSeq" id="NP_997544.1">
    <molecule id="Q6PJT7-4"/>
    <property type="nucleotide sequence ID" value="NM_207661.3"/>
</dbReference>
<dbReference type="RefSeq" id="NP_997545.2">
    <molecule id="Q6PJT7-6"/>
    <property type="nucleotide sequence ID" value="NM_207662.3"/>
</dbReference>
<dbReference type="RefSeq" id="XP_005268125.1">
    <property type="nucleotide sequence ID" value="XM_005268068.4"/>
</dbReference>
<dbReference type="BioGRID" id="122967">
    <property type="interactions" value="191"/>
</dbReference>
<dbReference type="FunCoup" id="Q6PJT7">
    <property type="interactions" value="3157"/>
</dbReference>
<dbReference type="IntAct" id="Q6PJT7">
    <property type="interactions" value="128"/>
</dbReference>
<dbReference type="STRING" id="9606.ENSP00000251038"/>
<dbReference type="BindingDB" id="Q6PJT7"/>
<dbReference type="GlyConnect" id="2848">
    <molecule id="Q6PJT7-2"/>
    <property type="glycosylation" value="1 O-GlcNAc glycan (1 site)"/>
</dbReference>
<dbReference type="GlyCosmos" id="Q6PJT7">
    <property type="glycosylation" value="13 sites, 2 glycans"/>
</dbReference>
<dbReference type="GlyGen" id="Q6PJT7">
    <property type="glycosylation" value="30 sites, 2 O-linked glycans (30 sites)"/>
</dbReference>
<dbReference type="iPTMnet" id="Q6PJT7"/>
<dbReference type="MetOSite" id="Q6PJT7"/>
<dbReference type="PhosphoSitePlus" id="Q6PJT7"/>
<dbReference type="SwissPalm" id="Q6PJT7"/>
<dbReference type="BioMuta" id="ZC3H14"/>
<dbReference type="DMDM" id="74737935"/>
<dbReference type="jPOST" id="Q6PJT7"/>
<dbReference type="MassIVE" id="Q6PJT7"/>
<dbReference type="PaxDb" id="9606-ENSP00000251038"/>
<dbReference type="PeptideAtlas" id="Q6PJT7"/>
<dbReference type="ProteomicsDB" id="33599"/>
<dbReference type="ProteomicsDB" id="67217">
    <molecule id="Q6PJT7-1"/>
</dbReference>
<dbReference type="ProteomicsDB" id="67218">
    <molecule id="Q6PJT7-2"/>
</dbReference>
<dbReference type="ProteomicsDB" id="67219">
    <molecule id="Q6PJT7-3"/>
</dbReference>
<dbReference type="ProteomicsDB" id="67220">
    <molecule id="Q6PJT7-4"/>
</dbReference>
<dbReference type="ProteomicsDB" id="67221">
    <molecule id="Q6PJT7-5"/>
</dbReference>
<dbReference type="ProteomicsDB" id="67222">
    <molecule id="Q6PJT7-6"/>
</dbReference>
<dbReference type="ProteomicsDB" id="67223">
    <molecule id="Q6PJT7-8"/>
</dbReference>
<dbReference type="Pumba" id="Q6PJT7"/>
<dbReference type="Antibodypedia" id="26309">
    <property type="antibodies" value="140 antibodies from 24 providers"/>
</dbReference>
<dbReference type="DNASU" id="79882"/>
<dbReference type="Ensembl" id="ENST00000251038.10">
    <molecule id="Q6PJT7-1"/>
    <property type="protein sequence ID" value="ENSP00000251038.5"/>
    <property type="gene ID" value="ENSG00000100722.20"/>
</dbReference>
<dbReference type="Ensembl" id="ENST00000302216.12">
    <molecule id="Q6PJT7-3"/>
    <property type="protein sequence ID" value="ENSP00000307025.8"/>
    <property type="gene ID" value="ENSG00000100722.20"/>
</dbReference>
<dbReference type="Ensembl" id="ENST00000318308.10">
    <molecule id="Q6PJT7-6"/>
    <property type="protein sequence ID" value="ENSP00000327176.6"/>
    <property type="gene ID" value="ENSG00000100722.20"/>
</dbReference>
<dbReference type="Ensembl" id="ENST00000336693.8">
    <molecule id="Q6PJT7-4"/>
    <property type="protein sequence ID" value="ENSP00000338002.4"/>
    <property type="gene ID" value="ENSG00000100722.20"/>
</dbReference>
<dbReference type="Ensembl" id="ENST00000393514.9">
    <molecule id="Q6PJT7-5"/>
    <property type="protein sequence ID" value="ENSP00000377150.5"/>
    <property type="gene ID" value="ENSG00000100722.20"/>
</dbReference>
<dbReference type="Ensembl" id="ENST00000406216.7">
    <molecule id="Q6PJT7-8"/>
    <property type="protein sequence ID" value="ENSP00000384682.3"/>
    <property type="gene ID" value="ENSG00000100722.20"/>
</dbReference>
<dbReference type="Ensembl" id="ENST00000555755.5">
    <molecule id="Q6PJT7-9"/>
    <property type="protein sequence ID" value="ENSP00000452475.1"/>
    <property type="gene ID" value="ENSG00000100722.20"/>
</dbReference>
<dbReference type="GeneID" id="79882"/>
<dbReference type="KEGG" id="hsa:79882"/>
<dbReference type="MANE-Select" id="ENST00000251038.10">
    <property type="protein sequence ID" value="ENSP00000251038.5"/>
    <property type="RefSeq nucleotide sequence ID" value="NM_024824.5"/>
    <property type="RefSeq protein sequence ID" value="NP_079100.2"/>
</dbReference>
<dbReference type="UCSC" id="uc001xww.4">
    <molecule id="Q6PJT7-1"/>
    <property type="organism name" value="human"/>
</dbReference>
<dbReference type="AGR" id="HGNC:20509"/>
<dbReference type="CTD" id="79882"/>
<dbReference type="DisGeNET" id="79882"/>
<dbReference type="GeneCards" id="ZC3H14"/>
<dbReference type="HGNC" id="HGNC:20509">
    <property type="gene designation" value="ZC3H14"/>
</dbReference>
<dbReference type="HPA" id="ENSG00000100722">
    <property type="expression patterns" value="Tissue enhanced (testis)"/>
</dbReference>
<dbReference type="MalaCards" id="ZC3H14"/>
<dbReference type="MIM" id="613279">
    <property type="type" value="gene"/>
</dbReference>
<dbReference type="MIM" id="617125">
    <property type="type" value="phenotype"/>
</dbReference>
<dbReference type="neXtProt" id="NX_Q6PJT7"/>
<dbReference type="OpenTargets" id="ENSG00000100722"/>
<dbReference type="Orphanet" id="88616">
    <property type="disease" value="Autosomal recessive non-syndromic intellectual disability"/>
</dbReference>
<dbReference type="PharmGKB" id="PA145007270"/>
<dbReference type="VEuPathDB" id="HostDB:ENSG00000100722"/>
<dbReference type="eggNOG" id="KOG3702">
    <property type="taxonomic scope" value="Eukaryota"/>
</dbReference>
<dbReference type="GeneTree" id="ENSGT00440000038430"/>
<dbReference type="HOGENOM" id="CLU_022605_0_0_1"/>
<dbReference type="InParanoid" id="Q6PJT7"/>
<dbReference type="OMA" id="CPYTHVS"/>
<dbReference type="OrthoDB" id="5589010at2759"/>
<dbReference type="PAN-GO" id="Q6PJT7">
    <property type="GO annotations" value="5 GO annotations based on evolutionary models"/>
</dbReference>
<dbReference type="PhylomeDB" id="Q6PJT7"/>
<dbReference type="TreeFam" id="TF329509"/>
<dbReference type="PathwayCommons" id="Q6PJT7"/>
<dbReference type="SignaLink" id="Q6PJT7"/>
<dbReference type="BioGRID-ORCS" id="79882">
    <property type="hits" value="17 hits in 1162 CRISPR screens"/>
</dbReference>
<dbReference type="CD-CODE" id="804901D1">
    <property type="entry name" value="Nuclear speckle"/>
</dbReference>
<dbReference type="CD-CODE" id="DEE660B4">
    <property type="entry name" value="Stress granule"/>
</dbReference>
<dbReference type="ChiTaRS" id="ZC3H14">
    <property type="organism name" value="human"/>
</dbReference>
<dbReference type="GenomeRNAi" id="79882"/>
<dbReference type="Pharos" id="Q6PJT7">
    <property type="development level" value="Tbio"/>
</dbReference>
<dbReference type="PRO" id="PR:Q6PJT7"/>
<dbReference type="Proteomes" id="UP000005640">
    <property type="component" value="Chromosome 14"/>
</dbReference>
<dbReference type="RNAct" id="Q6PJT7">
    <property type="molecule type" value="protein"/>
</dbReference>
<dbReference type="Bgee" id="ENSG00000100722">
    <property type="expression patterns" value="Expressed in left testis and 208 other cell types or tissues"/>
</dbReference>
<dbReference type="ExpressionAtlas" id="Q6PJT7">
    <property type="expression patterns" value="baseline and differential"/>
</dbReference>
<dbReference type="GO" id="GO:1904115">
    <property type="term" value="C:axon cytoplasm"/>
    <property type="evidence" value="ECO:0000314"/>
    <property type="project" value="FlyBase"/>
</dbReference>
<dbReference type="GO" id="GO:0005737">
    <property type="term" value="C:cytoplasm"/>
    <property type="evidence" value="ECO:0000314"/>
    <property type="project" value="UniProtKB"/>
</dbReference>
<dbReference type="GO" id="GO:0032839">
    <property type="term" value="C:dendrite cytoplasm"/>
    <property type="evidence" value="ECO:0000314"/>
    <property type="project" value="FlyBase"/>
</dbReference>
<dbReference type="GO" id="GO:0016607">
    <property type="term" value="C:nuclear speck"/>
    <property type="evidence" value="ECO:0000314"/>
    <property type="project" value="HPA"/>
</dbReference>
<dbReference type="GO" id="GO:0005730">
    <property type="term" value="C:nucleolus"/>
    <property type="evidence" value="ECO:0000314"/>
    <property type="project" value="HPA"/>
</dbReference>
<dbReference type="GO" id="GO:0005634">
    <property type="term" value="C:nucleus"/>
    <property type="evidence" value="ECO:0000314"/>
    <property type="project" value="UniProtKB"/>
</dbReference>
<dbReference type="GO" id="GO:1990904">
    <property type="term" value="C:ribonucleoprotein complex"/>
    <property type="evidence" value="ECO:0000314"/>
    <property type="project" value="FlyBase"/>
</dbReference>
<dbReference type="GO" id="GO:0003730">
    <property type="term" value="F:mRNA 3'-UTR binding"/>
    <property type="evidence" value="ECO:0000314"/>
    <property type="project" value="UniProtKB"/>
</dbReference>
<dbReference type="GO" id="GO:0008143">
    <property type="term" value="F:poly(A) binding"/>
    <property type="evidence" value="ECO:0000250"/>
    <property type="project" value="UniProtKB"/>
</dbReference>
<dbReference type="GO" id="GO:0036002">
    <property type="term" value="F:pre-mRNA binding"/>
    <property type="evidence" value="ECO:0000314"/>
    <property type="project" value="UniProtKB"/>
</dbReference>
<dbReference type="GO" id="GO:0003723">
    <property type="term" value="F:RNA binding"/>
    <property type="evidence" value="ECO:0007005"/>
    <property type="project" value="UniProtKB"/>
</dbReference>
<dbReference type="GO" id="GO:0008270">
    <property type="term" value="F:zinc ion binding"/>
    <property type="evidence" value="ECO:0007669"/>
    <property type="project" value="UniProtKB-KW"/>
</dbReference>
<dbReference type="GO" id="GO:0048255">
    <property type="term" value="P:mRNA stabilization"/>
    <property type="evidence" value="ECO:0000314"/>
    <property type="project" value="UniProtKB"/>
</dbReference>
<dbReference type="GO" id="GO:0043488">
    <property type="term" value="P:regulation of mRNA stability"/>
    <property type="evidence" value="ECO:0000318"/>
    <property type="project" value="GO_Central"/>
</dbReference>
<dbReference type="GO" id="GO:0007283">
    <property type="term" value="P:spermatogenesis"/>
    <property type="evidence" value="ECO:0000250"/>
    <property type="project" value="UniProtKB"/>
</dbReference>
<dbReference type="GO" id="GO:0160091">
    <property type="term" value="P:spliceosome-depend formation of circular RNA"/>
    <property type="evidence" value="ECO:0000314"/>
    <property type="project" value="UniProtKB"/>
</dbReference>
<dbReference type="FunFam" id="4.10.1000.30:FF:000001">
    <property type="entry name" value="Zinc finger CCCH domain-containing protein 14"/>
    <property type="match status" value="1"/>
</dbReference>
<dbReference type="FunFam" id="4.10.1000.40:FF:000006">
    <property type="entry name" value="Zinc finger CCCH domain-containing protein 14"/>
    <property type="match status" value="1"/>
</dbReference>
<dbReference type="FunFam" id="1.20.1390.10:FF:000006">
    <property type="entry name" value="zinc finger CCCH domain-containing protein 14"/>
    <property type="match status" value="1"/>
</dbReference>
<dbReference type="FunFam" id="4.10.1000.40:FF:000001">
    <property type="entry name" value="zinc finger CCCH domain-containing protein 14 isoform X2"/>
    <property type="match status" value="1"/>
</dbReference>
<dbReference type="FunFam" id="4.10.1000.30:FF:000003">
    <property type="entry name" value="zinc finger CCCH domain-containing protein 14 isoform X6"/>
    <property type="match status" value="1"/>
</dbReference>
<dbReference type="Gene3D" id="4.10.1000.30">
    <property type="match status" value="1"/>
</dbReference>
<dbReference type="Gene3D" id="4.10.1000.40">
    <property type="match status" value="1"/>
</dbReference>
<dbReference type="Gene3D" id="1.20.1390.10">
    <property type="entry name" value="PWI domain"/>
    <property type="match status" value="1"/>
</dbReference>
<dbReference type="InterPro" id="IPR040366">
    <property type="entry name" value="Nab2/ZC3H14"/>
</dbReference>
<dbReference type="InterPro" id="IPR000571">
    <property type="entry name" value="Znf_CCCH"/>
</dbReference>
<dbReference type="PANTHER" id="PTHR14738">
    <property type="entry name" value="ZINC FINGER CCCH DOMAIN-CONTAINING PROTEIN 14"/>
    <property type="match status" value="1"/>
</dbReference>
<dbReference type="PANTHER" id="PTHR14738:SF29">
    <property type="entry name" value="ZINC FINGER CCCH DOMAIN-CONTAINING PROTEIN 14"/>
    <property type="match status" value="1"/>
</dbReference>
<dbReference type="Pfam" id="PF14608">
    <property type="entry name" value="zf-CCCH_2"/>
    <property type="match status" value="5"/>
</dbReference>
<dbReference type="SMART" id="SM00356">
    <property type="entry name" value="ZnF_C3H1"/>
    <property type="match status" value="3"/>
</dbReference>
<dbReference type="PROSITE" id="PS50103">
    <property type="entry name" value="ZF_C3H1"/>
    <property type="match status" value="3"/>
</dbReference>
<feature type="chain" id="PRO_0000331311" description="Zinc finger CCCH domain-containing protein 14">
    <location>
        <begin position="1"/>
        <end position="736"/>
    </location>
</feature>
<feature type="zinc finger region" description="C3H1-type 1" evidence="3">
    <location>
        <begin position="595"/>
        <end position="620"/>
    </location>
</feature>
<feature type="zinc finger region" description="C3H1-type 2" evidence="3">
    <location>
        <begin position="621"/>
        <end position="640"/>
    </location>
</feature>
<feature type="zinc finger region" description="C3H1-type 3" evidence="3">
    <location>
        <begin position="641"/>
        <end position="656"/>
    </location>
</feature>
<feature type="zinc finger region" description="C3H1-type 4" evidence="3">
    <location>
        <begin position="682"/>
        <end position="699"/>
    </location>
</feature>
<feature type="zinc finger region" description="C3H1-type 5" evidence="3">
    <location>
        <begin position="701"/>
        <end position="719"/>
    </location>
</feature>
<feature type="region of interest" description="Disordered" evidence="4">
    <location>
        <begin position="77"/>
        <end position="145"/>
    </location>
</feature>
<feature type="region of interest" description="Disordered" evidence="4">
    <location>
        <begin position="310"/>
        <end position="350"/>
    </location>
</feature>
<feature type="region of interest" description="Disordered" evidence="4">
    <location>
        <begin position="398"/>
        <end position="430"/>
    </location>
</feature>
<feature type="compositionally biased region" description="Polar residues" evidence="4">
    <location>
        <begin position="77"/>
        <end position="103"/>
    </location>
</feature>
<feature type="compositionally biased region" description="Polar residues" evidence="4">
    <location>
        <begin position="131"/>
        <end position="145"/>
    </location>
</feature>
<feature type="compositionally biased region" description="Basic and acidic residues" evidence="4">
    <location>
        <begin position="412"/>
        <end position="423"/>
    </location>
</feature>
<feature type="modified residue" description="N-acetylmethionine" evidence="30">
    <location>
        <position position="1"/>
    </location>
</feature>
<feature type="modified residue" description="Phosphoserine" evidence="2">
    <location>
        <position position="85"/>
    </location>
</feature>
<feature type="modified residue" description="Phosphoserine" evidence="31">
    <location>
        <position position="240"/>
    </location>
</feature>
<feature type="modified residue" description="Phosphoserine" evidence="31">
    <location>
        <position position="281"/>
    </location>
</feature>
<feature type="modified residue" description="Phosphoserine" evidence="31">
    <location>
        <position position="327"/>
    </location>
</feature>
<feature type="modified residue" description="Phosphoserine" evidence="31 32">
    <location>
        <position position="343"/>
    </location>
</feature>
<feature type="modified residue" description="N6-acetyllysine; alternate" evidence="26">
    <location>
        <position position="357"/>
    </location>
</feature>
<feature type="modified residue" description="Phosphoserine" evidence="31">
    <location>
        <position position="390"/>
    </location>
</feature>
<feature type="modified residue" description="Phosphoserine" evidence="31">
    <location>
        <position position="409"/>
    </location>
</feature>
<feature type="modified residue" description="Phosphoserine" evidence="31">
    <location>
        <position position="421"/>
    </location>
</feature>
<feature type="modified residue" description="Phosphoserine" evidence="31">
    <location>
        <position position="498"/>
    </location>
</feature>
<feature type="modified residue" description="Phosphoserine" evidence="24 25 27 28 29 31 32">
    <location>
        <position position="515"/>
    </location>
</feature>
<feature type="modified residue" description="Phosphoserine" evidence="2">
    <location>
        <position position="527"/>
    </location>
</feature>
<feature type="modified residue" description="Phosphoserine" evidence="24">
    <location>
        <position position="620"/>
    </location>
</feature>
<feature type="cross-link" description="Glycyl lysine isopeptide (Lys-Gly) (interchain with G-Cter in SUMO2)" evidence="36">
    <location>
        <position position="99"/>
    </location>
</feature>
<feature type="cross-link" description="Glycyl lysine isopeptide (Lys-Gly) (interchain with G-Cter in SUMO2)" evidence="36">
    <location>
        <position position="139"/>
    </location>
</feature>
<feature type="cross-link" description="Glycyl lysine isopeptide (Lys-Gly) (interchain with G-Cter in SUMO2)" evidence="33 35 36">
    <location>
        <position position="175"/>
    </location>
</feature>
<feature type="cross-link" description="Glycyl lysine isopeptide (Lys-Gly) (interchain with G-Cter in SUMO2)" evidence="36">
    <location>
        <position position="198"/>
    </location>
</feature>
<feature type="cross-link" description="Glycyl lysine isopeptide (Lys-Gly) (interchain with G-Cter in SUMO2)" evidence="36">
    <location>
        <position position="245"/>
    </location>
</feature>
<feature type="cross-link" description="Glycyl lysine isopeptide (Lys-Gly) (interchain with G-Cter in SUMO2)" evidence="36">
    <location>
        <position position="283"/>
    </location>
</feature>
<feature type="cross-link" description="Glycyl lysine isopeptide (Lys-Gly) (interchain with G-Cter in SUMO2)" evidence="36">
    <location>
        <position position="295"/>
    </location>
</feature>
<feature type="cross-link" description="Glycyl lysine isopeptide (Lys-Gly) (interchain with G-Cter in SUMO2); alternate" evidence="36">
    <location>
        <position position="357"/>
    </location>
</feature>
<feature type="cross-link" description="Glycyl lysine isopeptide (Lys-Gly) (interchain with G-Cter in SUMO2)" evidence="36">
    <location>
        <position position="378"/>
    </location>
</feature>
<feature type="cross-link" description="Glycyl lysine isopeptide (Lys-Gly) (interchain with G-Cter in SUMO2)" evidence="33 34 35 36">
    <location>
        <position position="413"/>
    </location>
</feature>
<feature type="cross-link" description="Glycyl lysine isopeptide (Lys-Gly) (interchain with G-Cter in SUMO2)" evidence="36">
    <location>
        <position position="489"/>
    </location>
</feature>
<feature type="splice variant" id="VSP_033162" description="In isoform 8." evidence="19">
    <location>
        <begin position="1"/>
        <end position="454"/>
    </location>
</feature>
<feature type="splice variant" id="VSP_033163" description="In isoform 6." evidence="15">
    <location>
        <begin position="1"/>
        <end position="298"/>
    </location>
</feature>
<feature type="splice variant" id="VSP_033164" description="In isoform 4." evidence="16 20">
    <location>
        <begin position="1"/>
        <end position="34"/>
    </location>
</feature>
<feature type="splice variant" id="VSP_055096" description="In isoform 11." evidence="14">
    <location>
        <begin position="95"/>
        <end position="113"/>
    </location>
</feature>
<feature type="splice variant" id="VSP_055097" description="In isoform 10." evidence="14">
    <location>
        <begin position="123"/>
        <end position="159"/>
    </location>
</feature>
<feature type="splice variant" id="VSP_033165" description="In isoform 6." evidence="15">
    <original>VSSVVKVKKFNHDGEEEEEDDDYGSRTGSISSSVSVPAKPERRPSLPPSKQANKNLILKAISEAQESVTKTTNYSTVPQKQTLPVAPRTRTSQEELLAEVVQGQSRTPRISPPIKEEETKGDSVEKNQ</original>
    <variation>MRMSSKFPSPPLPIFLPPEPVDLGSITSSSCSLNELDNISHLLRKISADINEIKGMKAAILTVEANLFDLNVRVSKNEAKISSLEVKMNEYSTTYECNRQFEDQEEDTESQSRTTDVKIIGFLRNVEK</variation>
    <location>
        <begin position="299"/>
        <end position="426"/>
    </location>
</feature>
<feature type="splice variant" id="VSP_033166" description="In isoform 3 and isoform 10." evidence="14 20">
    <location>
        <begin position="427"/>
        <end position="582"/>
    </location>
</feature>
<feature type="splice variant" id="VSP_033167" description="In isoform 5." evidence="21">
    <location>
        <begin position="427"/>
        <end position="451"/>
    </location>
</feature>
<feature type="splice variant" id="VSP_033168" description="In isoform 4, isoform 6 and isoform 11." evidence="14 15 16 20">
    <location>
        <begin position="452"/>
        <end position="582"/>
    </location>
</feature>
<feature type="splice variant" id="VSP_033169" description="In isoform 8." evidence="19">
    <original>DMESMVHADTRSFILKKPKLSEEVVVAPNQESGMKTADSLRVLSGHLMQTRDLVQPDKPASPKFIVTLDGVPSPPGYMSDQEEDMCFEGMKPVNQTAASNKGLRGLLHPQQLHLLSRQLEDPNGSFSN</original>
    <variation>MRMSSKFPSPPLPIFLPPEPVDLGSITSSSCSLNELDNISHLLRKISADINEIKGMKAAILTVEANLFDLNVRVSKNEAKISSLEVKMNEYSTTYECNRQFEDQEEDTESQSRTTDVKIIGFLRNVEK</variation>
    <location>
        <begin position="455"/>
        <end position="582"/>
    </location>
</feature>
<feature type="splice variant" id="VSP_044645" description="In isoform 9." evidence="14">
    <location>
        <begin position="577"/>
        <end position="581"/>
    </location>
</feature>
<feature type="splice variant" id="VSP_033171" description="In isoform 2, isoform 3, isoform 6, isoform 9 and isoform 11." evidence="13 14 15 20 21">
    <location>
        <position position="669"/>
    </location>
</feature>
<feature type="sequence variant" id="VAR_090164" description="In MRT56." evidence="8">
    <location>
        <begin position="154"/>
        <end position="736"/>
    </location>
</feature>
<feature type="sequence conflict" description="In Ref. 3; BAG63510." evidence="22" ref="3">
    <original>A</original>
    <variation>V</variation>
    <location>
        <position position="113"/>
    </location>
</feature>
<feature type="sequence conflict" description="In Ref. 3; BAG64229." evidence="22" ref="3">
    <original>S</original>
    <variation>P</variation>
    <location>
        <position position="323"/>
    </location>
</feature>
<feature type="sequence conflict" description="In Ref. 3; BAG65136." evidence="22" ref="3">
    <original>M</original>
    <variation>V</variation>
    <location>
        <position position="532"/>
    </location>
</feature>
<feature type="sequence conflict" description="In Ref. 7; AAH23641." evidence="22" ref="7">
    <original>A</original>
    <variation>V</variation>
    <location>
        <position position="674"/>
    </location>
</feature>
<feature type="sequence conflict" description="In Ref. 2; AAS90302 and 4; CAE45933." evidence="22" ref="2 4">
    <original>C</original>
    <variation>F</variation>
    <location>
        <position position="712"/>
    </location>
</feature>
<feature type="sequence conflict" description="In Ref. 3; BAG65136." evidence="22" ref="3">
    <original>T</original>
    <variation>P</variation>
    <location>
        <position position="718"/>
    </location>
</feature>
<gene>
    <name evidence="18 23" type="primary">ZC3H14</name>
</gene>
<sequence length="736" mass="82876">MEIGTEISRKIRSAIKGKLQELGAYVDEELPDYIMVMVANKKSQDQMTEDLSLFLGNNTIRFTVWLHGVLDKLRSVTTEPSSLKSSDTNIFDSNVPSNKSNFSRGDERRHEAAVPPLAIPSARPEKRDSRVSTSSQESKTTNVRQTYDDGAATRLMSTVKPLREPAPSEDVIDIKPEPDDLIDEDLNFVQENPLSQKKPTVTLTYGSSRPSIEIYRPPASRNADSGVHLNRLQFQQQQNSIHAAKQLDMQSSWVYETGRLCEPEVLNSLEETYSPFFRNNSEKMSMEDENFRKRKLPVVSSVVKVKKFNHDGEEEEEDDDYGSRTGSISSSVSVPAKPERRPSLPPSKQANKNLILKAISEAQESVTKTTNYSTVPQKQTLPVAPRTRTSQEELLAEVVQGQSRTPRISPPIKEEETKGDSVEKNQGTQQRQLLSRLQIDPVMAETLQMSQDYYDMESMVHADTRSFILKKPKLSEEVVVAPNQESGMKTADSLRVLSGHLMQTRDLVQPDKPASPKFIVTLDGVPSPPGYMSDQEEDMCFEGMKPVNQTAASNKGLRGLLHPQQLHLLSRQLEDPNGSFSNAEMSELSVAQKPEKLLERCKYWPACKNGDECAYHHPISPCKAFPNCKFAEKCLFVHPNCKYDAKCTKPDCPFTHVSRRIPVLSPKPAVAPPAPPSSSQLCRYFPACKKMECPFYHPKHCRFNTQCTRPDCTFYHPTINVPPRHALKWIRPQTSE</sequence>
<comment type="function">
    <text evidence="5 9 10 12">RNA-binding protein involved in the biogenesis of circular RNAs (circRNAs), which are produced by back-splicing circularization of pre-mRNAs (PubMed:39461343). Acts by binding to both exon-intron boundary and 3'-UTR of pre-mRNAs to promote circRNA biogenesis through dimerization and the association with the spliceosome (PubMed:39461343). Required for spermatogenesis via involvement in circRNA biogenesis (PubMed:39461343). Regulates the pre-mRNA processing of ATP5MC1; preventing its degradation (PubMed:27563065). Also binds the poly(A) tail of mRNAs; controlling poly(A) length in neuronal cells (PubMed:17630287, PubMed:24671764).</text>
</comment>
<comment type="subunit">
    <text evidence="6 11 12">Homodimer; facilitating circular RNAs (circRNAs) formation (PubMed:39461343). Associates with the spliceosome (PubMed:39461343). Interacts with HOOK2 (PubMed:19273536). Interacts with ZFC3H1 in a RNase-sensitive manner (PubMed:27871484).</text>
</comment>
<comment type="interaction">
    <interactant intactId="EBI-740660">
        <id>Q6PJT7</id>
    </interactant>
    <interactant intactId="EBI-10173632">
        <id>P35638-2</id>
        <label>DDIT3</label>
    </interactant>
    <organismsDiffer>false</organismsDiffer>
    <experiments>3</experiments>
</comment>
<comment type="interaction">
    <interactant intactId="EBI-12147703">
        <id>Q6PJT7-6</id>
    </interactant>
    <interactant intactId="EBI-743027">
        <id>P51808</id>
        <label>DYNLT3</label>
    </interactant>
    <organismsDiffer>false</organismsDiffer>
    <experiments>3</experiments>
</comment>
<comment type="interaction">
    <interactant intactId="EBI-12147703">
        <id>Q6PJT7-6</id>
    </interactant>
    <interactant intactId="EBI-3044087">
        <id>Q7Z3Y8</id>
        <label>KRT27</label>
    </interactant>
    <organismsDiffer>false</organismsDiffer>
    <experiments>3</experiments>
</comment>
<comment type="subcellular location">
    <subcellularLocation>
        <location evidence="5 7 9 10 12">Nucleus speckle</location>
    </subcellularLocation>
    <text evidence="1">Colocalizes with poly(A) RNA in nuclear speckles.</text>
</comment>
<comment type="subcellular location">
    <molecule>Isoform 1</molecule>
    <subcellularLocation>
        <location evidence="7">Nucleus speckle</location>
    </subcellularLocation>
</comment>
<comment type="subcellular location">
    <molecule>Isoform 3</molecule>
    <subcellularLocation>
        <location evidence="7">Nucleus speckle</location>
    </subcellularLocation>
</comment>
<comment type="subcellular location">
    <molecule>Isoform 6</molecule>
    <subcellularLocation>
        <location evidence="8">Cytoplasm</location>
    </subcellularLocation>
</comment>
<comment type="alternative products">
    <event type="alternative splicing"/>
    <isoform>
        <id>Q6PJT7-1</id>
        <name>1</name>
        <name>Isoform 1</name>
        <sequence type="displayed"/>
    </isoform>
    <isoform>
        <id>Q6PJT7-2</id>
        <name>2</name>
        <sequence type="described" ref="VSP_033171"/>
    </isoform>
    <isoform>
        <id>Q6PJT7-3</id>
        <name>3</name>
        <name>Isoform 2</name>
        <sequence type="described" ref="VSP_033166 VSP_033171"/>
    </isoform>
    <isoform>
        <id>Q6PJT7-4</id>
        <name>4</name>
        <name>Isoform 3 short</name>
        <sequence type="described" ref="VSP_033164 VSP_033168"/>
    </isoform>
    <isoform>
        <id>Q6PJT7-5</id>
        <name>5</name>
        <sequence type="described" ref="VSP_033167"/>
    </isoform>
    <isoform>
        <id>Q6PJT7-6</id>
        <name>6</name>
        <name>Isoform 4</name>
        <sequence type="described" ref="VSP_033163 VSP_033165 VSP_033168 VSP_033171"/>
    </isoform>
    <isoform>
        <id>Q6PJT7-8</id>
        <name>8</name>
        <sequence type="described" ref="VSP_033162 VSP_033169"/>
    </isoform>
    <isoform>
        <id>Q6PJT7-9</id>
        <name>9</name>
        <sequence type="described" ref="VSP_044645 VSP_033171"/>
    </isoform>
    <isoform>
        <id>Q6PJT7-10</id>
        <name>10</name>
        <sequence type="described" ref="VSP_055097 VSP_033166"/>
    </isoform>
    <isoform>
        <id>Q6PJT7-11</id>
        <name>11</name>
        <sequence type="described" ref="VSP_055096 VSP_033168 VSP_033171"/>
    </isoform>
</comment>
<comment type="tissue specificity">
    <molecule>Isoform 1</molecule>
    <text evidence="8">Expressed in fetal and adult brain (PubMed:21734151). Expressed in fetal and adult temporal lobe (PubMed:21734151).</text>
</comment>
<comment type="tissue specificity">
    <molecule>Isoform 6</molecule>
    <text evidence="8">Expressed in fetal and adult brain (PubMed:21734151). Expressed in fetal and adult temporal lobe (PubMed:21734151).</text>
</comment>
<comment type="disease" evidence="8">
    <disease id="DI-04823">
        <name>Intellectual developmental disorder, autosomal recessive 56</name>
        <acronym>MRT56</acronym>
        <description>A disorder characterized by significantly below average general intellectual functioning associated with impairments in adaptive behavior and manifested during the developmental period.</description>
        <dbReference type="MIM" id="617125"/>
    </disease>
    <text>The disease is caused by variants affecting the gene represented in this entry.</text>
</comment>
<comment type="miscellaneous">
    <text evidence="9">ZC3H14 can functionally substitute for Nab2 in fly neurons and can rescue defects in development and locomotion that are present in dNab2 null flies.</text>
</comment>
<comment type="similarity">
    <text evidence="22">Belongs to the ZC3H14 family.</text>
</comment>
<comment type="sequence caution" evidence="22">
    <conflict type="miscellaneous discrepancy">
        <sequence resource="EMBL-CDS" id="AAL83289"/>
    </conflict>
    <text>Several sequencing errors.</text>
</comment>
<comment type="sequence caution" evidence="22">
    <conflict type="frameshift">
        <sequence resource="EMBL-CDS" id="AAS90302"/>
    </conflict>
</comment>
<comment type="sequence caution" evidence="22">
    <conflict type="miscellaneous discrepancy">
        <sequence resource="EMBL-CDS" id="AAS90302"/>
    </conflict>
    <text>Aberrant splicing.</text>
</comment>
<comment type="sequence caution" evidence="22">
    <conflict type="frameshift">
        <sequence resource="EMBL" id="AK021868"/>
    </conflict>
</comment>
<comment type="sequence caution" evidence="22">
    <conflict type="miscellaneous discrepancy">
        <sequence resource="EMBL-CDS" id="CAE45933"/>
    </conflict>
    <text>Aberrant splicing.</text>
</comment>
<name>ZC3HE_HUMAN</name>
<protein>
    <recommendedName>
        <fullName evidence="22">Zinc finger CCCH domain-containing protein 14</fullName>
    </recommendedName>
    <alternativeName>
        <fullName evidence="17">Mammalian suppressor of tau pathology-2</fullName>
        <shortName evidence="17">MSUT-2</shortName>
    </alternativeName>
    <alternativeName>
        <fullName evidence="20">Renal carcinoma antigen NY-REN-37</fullName>
    </alternativeName>
</protein>
<keyword id="KW-0007">Acetylation</keyword>
<keyword id="KW-0025">Alternative splicing</keyword>
<keyword id="KW-0963">Cytoplasm</keyword>
<keyword id="KW-0221">Differentiation</keyword>
<keyword id="KW-0225">Disease variant</keyword>
<keyword id="KW-0991">Intellectual disability</keyword>
<keyword id="KW-1017">Isopeptide bond</keyword>
<keyword id="KW-0479">Metal-binding</keyword>
<keyword id="KW-0539">Nucleus</keyword>
<keyword id="KW-0597">Phosphoprotein</keyword>
<keyword id="KW-1267">Proteomics identification</keyword>
<keyword id="KW-1185">Reference proteome</keyword>
<keyword id="KW-0677">Repeat</keyword>
<keyword id="KW-0694">RNA-binding</keyword>
<keyword id="KW-0744">Spermatogenesis</keyword>
<keyword id="KW-0832">Ubl conjugation</keyword>
<keyword id="KW-0862">Zinc</keyword>
<keyword id="KW-0863">Zinc-finger</keyword>
<accession>Q6PJT7</accession>
<accession>A8MY46</accession>
<accession>B4DXU8</accession>
<accession>B4DZW7</accession>
<accession>B4E2H4</accession>
<accession>G3V5R4</accession>
<accession>Q6MZU4</accession>
<accession>Q6PJ32</accession>
<accession>Q6PUI6</accession>
<accession>Q6PUI8</accession>
<accession>Q86TQ5</accession>
<accession>Q86TW0</accession>
<accession>Q86TW1</accession>
<accession>Q8NCT6</accession>
<accession>Q8NCZ3</accession>
<accession>Q8TDE2</accession>
<accession>Q9HAC9</accession>
<accession>Q9Y5A0</accession>
<reference key="1">
    <citation type="submission" date="2002-01" db="EMBL/GenBank/DDBJ databases">
        <authorList>
            <person name="Guo J.H."/>
        </authorList>
    </citation>
    <scope>NUCLEOTIDE SEQUENCE [MRNA] (ISOFORM 8)</scope>
</reference>
<reference key="2">
    <citation type="submission" date="2004-03" db="EMBL/GenBank/DDBJ databases">
        <title>Homo sapiens putative NY-REN-37 antigen alternatively spliced isoforms.</title>
        <authorList>
            <person name="Zhou G."/>
            <person name="Wang X."/>
            <person name="Yu L."/>
        </authorList>
    </citation>
    <scope>NUCLEOTIDE SEQUENCE [MRNA] (ISOFORMS 1; 3 AND 4)</scope>
</reference>
<reference key="3">
    <citation type="journal article" date="2004" name="Nat. Genet.">
        <title>Complete sequencing and characterization of 21,243 full-length human cDNAs.</title>
        <authorList>
            <person name="Ota T."/>
            <person name="Suzuki Y."/>
            <person name="Nishikawa T."/>
            <person name="Otsuki T."/>
            <person name="Sugiyama T."/>
            <person name="Irie R."/>
            <person name="Wakamatsu A."/>
            <person name="Hayashi K."/>
            <person name="Sato H."/>
            <person name="Nagai K."/>
            <person name="Kimura K."/>
            <person name="Makita H."/>
            <person name="Sekine M."/>
            <person name="Obayashi M."/>
            <person name="Nishi T."/>
            <person name="Shibahara T."/>
            <person name="Tanaka T."/>
            <person name="Ishii S."/>
            <person name="Yamamoto J."/>
            <person name="Saito K."/>
            <person name="Kawai Y."/>
            <person name="Isono Y."/>
            <person name="Nakamura Y."/>
            <person name="Nagahari K."/>
            <person name="Murakami K."/>
            <person name="Yasuda T."/>
            <person name="Iwayanagi T."/>
            <person name="Wagatsuma M."/>
            <person name="Shiratori A."/>
            <person name="Sudo H."/>
            <person name="Hosoiri T."/>
            <person name="Kaku Y."/>
            <person name="Kodaira H."/>
            <person name="Kondo H."/>
            <person name="Sugawara M."/>
            <person name="Takahashi M."/>
            <person name="Kanda K."/>
            <person name="Yokoi T."/>
            <person name="Furuya T."/>
            <person name="Kikkawa E."/>
            <person name="Omura Y."/>
            <person name="Abe K."/>
            <person name="Kamihara K."/>
            <person name="Katsuta N."/>
            <person name="Sato K."/>
            <person name="Tanikawa M."/>
            <person name="Yamazaki M."/>
            <person name="Ninomiya K."/>
            <person name="Ishibashi T."/>
            <person name="Yamashita H."/>
            <person name="Murakawa K."/>
            <person name="Fujimori K."/>
            <person name="Tanai H."/>
            <person name="Kimata M."/>
            <person name="Watanabe M."/>
            <person name="Hiraoka S."/>
            <person name="Chiba Y."/>
            <person name="Ishida S."/>
            <person name="Ono Y."/>
            <person name="Takiguchi S."/>
            <person name="Watanabe S."/>
            <person name="Yosida M."/>
            <person name="Hotuta T."/>
            <person name="Kusano J."/>
            <person name="Kanehori K."/>
            <person name="Takahashi-Fujii A."/>
            <person name="Hara H."/>
            <person name="Tanase T.-O."/>
            <person name="Nomura Y."/>
            <person name="Togiya S."/>
            <person name="Komai F."/>
            <person name="Hara R."/>
            <person name="Takeuchi K."/>
            <person name="Arita M."/>
            <person name="Imose N."/>
            <person name="Musashino K."/>
            <person name="Yuuki H."/>
            <person name="Oshima A."/>
            <person name="Sasaki N."/>
            <person name="Aotsuka S."/>
            <person name="Yoshikawa Y."/>
            <person name="Matsunawa H."/>
            <person name="Ichihara T."/>
            <person name="Shiohata N."/>
            <person name="Sano S."/>
            <person name="Moriya S."/>
            <person name="Momiyama H."/>
            <person name="Satoh N."/>
            <person name="Takami S."/>
            <person name="Terashima Y."/>
            <person name="Suzuki O."/>
            <person name="Nakagawa S."/>
            <person name="Senoh A."/>
            <person name="Mizoguchi H."/>
            <person name="Goto Y."/>
            <person name="Shimizu F."/>
            <person name="Wakebe H."/>
            <person name="Hishigaki H."/>
            <person name="Watanabe T."/>
            <person name="Sugiyama A."/>
            <person name="Takemoto M."/>
            <person name="Kawakami B."/>
            <person name="Yamazaki M."/>
            <person name="Watanabe K."/>
            <person name="Kumagai A."/>
            <person name="Itakura S."/>
            <person name="Fukuzumi Y."/>
            <person name="Fujimori Y."/>
            <person name="Komiyama M."/>
            <person name="Tashiro H."/>
            <person name="Tanigami A."/>
            <person name="Fujiwara T."/>
            <person name="Ono T."/>
            <person name="Yamada K."/>
            <person name="Fujii Y."/>
            <person name="Ozaki K."/>
            <person name="Hirao M."/>
            <person name="Ohmori Y."/>
            <person name="Kawabata A."/>
            <person name="Hikiji T."/>
            <person name="Kobatake N."/>
            <person name="Inagaki H."/>
            <person name="Ikema Y."/>
            <person name="Okamoto S."/>
            <person name="Okitani R."/>
            <person name="Kawakami T."/>
            <person name="Noguchi S."/>
            <person name="Itoh T."/>
            <person name="Shigeta K."/>
            <person name="Senba T."/>
            <person name="Matsumura K."/>
            <person name="Nakajima Y."/>
            <person name="Mizuno T."/>
            <person name="Morinaga M."/>
            <person name="Sasaki M."/>
            <person name="Togashi T."/>
            <person name="Oyama M."/>
            <person name="Hata H."/>
            <person name="Watanabe M."/>
            <person name="Komatsu T."/>
            <person name="Mizushima-Sugano J."/>
            <person name="Satoh T."/>
            <person name="Shirai Y."/>
            <person name="Takahashi Y."/>
            <person name="Nakagawa K."/>
            <person name="Okumura K."/>
            <person name="Nagase T."/>
            <person name="Nomura N."/>
            <person name="Kikuchi H."/>
            <person name="Masuho Y."/>
            <person name="Yamashita R."/>
            <person name="Nakai K."/>
            <person name="Yada T."/>
            <person name="Nakamura Y."/>
            <person name="Ohara O."/>
            <person name="Isogai T."/>
            <person name="Sugano S."/>
        </authorList>
    </citation>
    <scope>NUCLEOTIDE SEQUENCE [LARGE SCALE MRNA] (ISOFORMS 3; 9; 10 AND 11)</scope>
    <source>
        <tissue>Embryo</tissue>
        <tissue>Testis</tissue>
        <tissue>Thymus</tissue>
        <tissue>Trachea</tissue>
    </source>
</reference>
<reference key="4">
    <citation type="journal article" date="2007" name="BMC Genomics">
        <title>The full-ORF clone resource of the German cDNA consortium.</title>
        <authorList>
            <person name="Bechtel S."/>
            <person name="Rosenfelder H."/>
            <person name="Duda A."/>
            <person name="Schmidt C.P."/>
            <person name="Ernst U."/>
            <person name="Wellenreuther R."/>
            <person name="Mehrle A."/>
            <person name="Schuster C."/>
            <person name="Bahr A."/>
            <person name="Bloecker H."/>
            <person name="Heubner D."/>
            <person name="Hoerlein A."/>
            <person name="Michel G."/>
            <person name="Wedler H."/>
            <person name="Koehrer K."/>
            <person name="Ottenwaelder B."/>
            <person name="Poustka A."/>
            <person name="Wiemann S."/>
            <person name="Schupp I."/>
        </authorList>
    </citation>
    <scope>NUCLEOTIDE SEQUENCE [LARGE SCALE MRNA] (ISOFORMS 1 AND 4)</scope>
    <source>
        <tissue>Esophageal carcinoma</tissue>
        <tissue>Testis</tissue>
    </source>
</reference>
<reference key="5">
    <citation type="journal article" date="2003" name="Nature">
        <title>The DNA sequence and analysis of human chromosome 14.</title>
        <authorList>
            <person name="Heilig R."/>
            <person name="Eckenberg R."/>
            <person name="Petit J.-L."/>
            <person name="Fonknechten N."/>
            <person name="Da Silva C."/>
            <person name="Cattolico L."/>
            <person name="Levy M."/>
            <person name="Barbe V."/>
            <person name="De Berardinis V."/>
            <person name="Ureta-Vidal A."/>
            <person name="Pelletier E."/>
            <person name="Vico V."/>
            <person name="Anthouard V."/>
            <person name="Rowen L."/>
            <person name="Madan A."/>
            <person name="Qin S."/>
            <person name="Sun H."/>
            <person name="Du H."/>
            <person name="Pepin K."/>
            <person name="Artiguenave F."/>
            <person name="Robert C."/>
            <person name="Cruaud C."/>
            <person name="Bruels T."/>
            <person name="Jaillon O."/>
            <person name="Friedlander L."/>
            <person name="Samson G."/>
            <person name="Brottier P."/>
            <person name="Cure S."/>
            <person name="Segurens B."/>
            <person name="Aniere F."/>
            <person name="Samain S."/>
            <person name="Crespeau H."/>
            <person name="Abbasi N."/>
            <person name="Aiach N."/>
            <person name="Boscus D."/>
            <person name="Dickhoff R."/>
            <person name="Dors M."/>
            <person name="Dubois I."/>
            <person name="Friedman C."/>
            <person name="Gouyvenoux M."/>
            <person name="James R."/>
            <person name="Madan A."/>
            <person name="Mairey-Estrada B."/>
            <person name="Mangenot S."/>
            <person name="Martins N."/>
            <person name="Menard M."/>
            <person name="Oztas S."/>
            <person name="Ratcliffe A."/>
            <person name="Shaffer T."/>
            <person name="Trask B."/>
            <person name="Vacherie B."/>
            <person name="Bellemere C."/>
            <person name="Belser C."/>
            <person name="Besnard-Gonnet M."/>
            <person name="Bartol-Mavel D."/>
            <person name="Boutard M."/>
            <person name="Briez-Silla S."/>
            <person name="Combette S."/>
            <person name="Dufosse-Laurent V."/>
            <person name="Ferron C."/>
            <person name="Lechaplais C."/>
            <person name="Louesse C."/>
            <person name="Muselet D."/>
            <person name="Magdelenat G."/>
            <person name="Pateau E."/>
            <person name="Petit E."/>
            <person name="Sirvain-Trukniewicz P."/>
            <person name="Trybou A."/>
            <person name="Vega-Czarny N."/>
            <person name="Bataille E."/>
            <person name="Bluet E."/>
            <person name="Bordelais I."/>
            <person name="Dubois M."/>
            <person name="Dumont C."/>
            <person name="Guerin T."/>
            <person name="Haffray S."/>
            <person name="Hammadi R."/>
            <person name="Muanga J."/>
            <person name="Pellouin V."/>
            <person name="Robert D."/>
            <person name="Wunderle E."/>
            <person name="Gauguet G."/>
            <person name="Roy A."/>
            <person name="Sainte-Marthe L."/>
            <person name="Verdier J."/>
            <person name="Verdier-Discala C."/>
            <person name="Hillier L.W."/>
            <person name="Fulton L."/>
            <person name="McPherson J."/>
            <person name="Matsuda F."/>
            <person name="Wilson R."/>
            <person name="Scarpelli C."/>
            <person name="Gyapay G."/>
            <person name="Wincker P."/>
            <person name="Saurin W."/>
            <person name="Quetier F."/>
            <person name="Waterston R."/>
            <person name="Hood L."/>
            <person name="Weissenbach J."/>
        </authorList>
    </citation>
    <scope>NUCLEOTIDE SEQUENCE [LARGE SCALE GENOMIC DNA]</scope>
</reference>
<reference key="6">
    <citation type="submission" date="2005-07" db="EMBL/GenBank/DDBJ databases">
        <authorList>
            <person name="Mural R.J."/>
            <person name="Istrail S."/>
            <person name="Sutton G.G."/>
            <person name="Florea L."/>
            <person name="Halpern A.L."/>
            <person name="Mobarry C.M."/>
            <person name="Lippert R."/>
            <person name="Walenz B."/>
            <person name="Shatkay H."/>
            <person name="Dew I."/>
            <person name="Miller J.R."/>
            <person name="Flanigan M.J."/>
            <person name="Edwards N.J."/>
            <person name="Bolanos R."/>
            <person name="Fasulo D."/>
            <person name="Halldorsson B.V."/>
            <person name="Hannenhalli S."/>
            <person name="Turner R."/>
            <person name="Yooseph S."/>
            <person name="Lu F."/>
            <person name="Nusskern D.R."/>
            <person name="Shue B.C."/>
            <person name="Zheng X.H."/>
            <person name="Zhong F."/>
            <person name="Delcher A.L."/>
            <person name="Huson D.H."/>
            <person name="Kravitz S.A."/>
            <person name="Mouchard L."/>
            <person name="Reinert K."/>
            <person name="Remington K.A."/>
            <person name="Clark A.G."/>
            <person name="Waterman M.S."/>
            <person name="Eichler E.E."/>
            <person name="Adams M.D."/>
            <person name="Hunkapiller M.W."/>
            <person name="Myers E.W."/>
            <person name="Venter J.C."/>
        </authorList>
    </citation>
    <scope>NUCLEOTIDE SEQUENCE [LARGE SCALE GENOMIC DNA]</scope>
</reference>
<reference key="7">
    <citation type="journal article" date="2004" name="Genome Res.">
        <title>The status, quality, and expansion of the NIH full-length cDNA project: the Mammalian Gene Collection (MGC).</title>
        <authorList>
            <consortium name="The MGC Project Team"/>
        </authorList>
    </citation>
    <scope>NUCLEOTIDE SEQUENCE [LARGE SCALE MRNA] (ISOFORMS 1 AND 6)</scope>
    <scope>NUCLEOTIDE SEQUENCE [LARGE SCALE MRNA] OF 91-736 (ISOFORM 2)</scope>
    <source>
        <tissue>Muscle</tissue>
        <tissue>Skin</tissue>
        <tissue>Testis</tissue>
    </source>
</reference>
<reference key="8">
    <citation type="submission" date="2003-02" db="EMBL/GenBank/DDBJ databases">
        <title>Full-length cDNA libraries and normalization.</title>
        <authorList>
            <person name="Li W.B."/>
            <person name="Gruber C."/>
            <person name="Jessee J."/>
            <person name="Polayes D."/>
        </authorList>
    </citation>
    <scope>NUCLEOTIDE SEQUENCE [LARGE SCALE MRNA] OF 86-736 (ISOFORM 2)</scope>
    <scope>NUCLEOTIDE SEQUENCE [LARGE SCALE MRNA] OF 368-736 (ISOFORM 5)</scope>
    <scope>NUCLEOTIDE SEQUENCE [LARGE SCALE MRNA] OF 630-736 (ISOFORM 1)</scope>
    <source>
        <tissue>Neuroblastoma</tissue>
        <tissue>Placenta</tissue>
    </source>
</reference>
<reference key="9">
    <citation type="journal article" date="1999" name="Int. J. Cancer">
        <title>Antigens recognized by autologous antibody in patients with renal-cell carcinoma.</title>
        <authorList>
            <person name="Scanlan M.J."/>
            <person name="Gordan J.D."/>
            <person name="Williamson B."/>
            <person name="Stockert E."/>
            <person name="Bander N.H."/>
            <person name="Jongeneel C.V."/>
            <person name="Gure A.O."/>
            <person name="Jaeger D."/>
            <person name="Jaeger E."/>
            <person name="Knuth A."/>
            <person name="Chen Y.-T."/>
            <person name="Old L.J."/>
        </authorList>
    </citation>
    <scope>NUCLEOTIDE SEQUENCE [MRNA] OF 563-736 (ISOFORM 2)</scope>
    <scope>IDENTIFICATION AS A RENAL CANCER ANTIGEN</scope>
    <source>
        <tissue>Renal cell carcinoma</tissue>
    </source>
</reference>
<reference key="10">
    <citation type="journal article" date="2006" name="Cell">
        <title>Global, in vivo, and site-specific phosphorylation dynamics in signaling networks.</title>
        <authorList>
            <person name="Olsen J.V."/>
            <person name="Blagoev B."/>
            <person name="Gnad F."/>
            <person name="Macek B."/>
            <person name="Kumar C."/>
            <person name="Mortensen P."/>
            <person name="Mann M."/>
        </authorList>
    </citation>
    <scope>PHOSPHORYLATION [LARGE SCALE ANALYSIS] AT SER-515 AND SER-620</scope>
    <scope>IDENTIFICATION BY MASS SPECTROMETRY [LARGE SCALE ANALYSIS]</scope>
    <source>
        <tissue>Cervix carcinoma</tissue>
    </source>
</reference>
<reference key="11">
    <citation type="journal article" date="2007" name="Proc. Natl. Acad. Sci. U.S.A.">
        <title>Recognition of polyadenosine RNA by zinc finger proteins.</title>
        <authorList>
            <person name="Kelly S.M."/>
            <person name="Pabit S.A."/>
            <person name="Kitchen C.M."/>
            <person name="Guo P."/>
            <person name="Marfatia K.A."/>
            <person name="Murphy T.J."/>
            <person name="Corbett A.H."/>
            <person name="Berland K.M."/>
        </authorList>
    </citation>
    <scope>FUNCTION</scope>
    <scope>SUBCELLULAR LOCATION</scope>
</reference>
<reference key="12">
    <citation type="journal article" date="2007" name="Science">
        <title>ATM and ATR substrate analysis reveals extensive protein networks responsive to DNA damage.</title>
        <authorList>
            <person name="Matsuoka S."/>
            <person name="Ballif B.A."/>
            <person name="Smogorzewska A."/>
            <person name="McDonald E.R. III"/>
            <person name="Hurov K.E."/>
            <person name="Luo J."/>
            <person name="Bakalarski C.E."/>
            <person name="Zhao Z."/>
            <person name="Solimini N."/>
            <person name="Lerenthal Y."/>
            <person name="Shiloh Y."/>
            <person name="Gygi S.P."/>
            <person name="Elledge S.J."/>
        </authorList>
    </citation>
    <scope>IDENTIFICATION BY MASS SPECTROMETRY [LARGE SCALE ANALYSIS]</scope>
    <source>
        <tissue>Embryonic kidney</tissue>
    </source>
</reference>
<reference key="13">
    <citation type="journal article" date="2008" name="Mol. Cell">
        <title>Kinase-selective enrichment enables quantitative phosphoproteomics of the kinome across the cell cycle.</title>
        <authorList>
            <person name="Daub H."/>
            <person name="Olsen J.V."/>
            <person name="Bairlein M."/>
            <person name="Gnad F."/>
            <person name="Oppermann F.S."/>
            <person name="Korner R."/>
            <person name="Greff Z."/>
            <person name="Keri G."/>
            <person name="Stemmann O."/>
            <person name="Mann M."/>
        </authorList>
    </citation>
    <scope>PHOSPHORYLATION [LARGE SCALE ANALYSIS] AT SER-515</scope>
    <scope>IDENTIFICATION BY MASS SPECTROMETRY [LARGE SCALE ANALYSIS]</scope>
    <source>
        <tissue>Cervix carcinoma</tissue>
    </source>
</reference>
<reference key="14">
    <citation type="journal article" date="2008" name="Proc. Natl. Acad. Sci. U.S.A.">
        <title>A quantitative atlas of mitotic phosphorylation.</title>
        <authorList>
            <person name="Dephoure N."/>
            <person name="Zhou C."/>
            <person name="Villen J."/>
            <person name="Beausoleil S.A."/>
            <person name="Bakalarski C.E."/>
            <person name="Elledge S.J."/>
            <person name="Gygi S.P."/>
        </authorList>
    </citation>
    <scope>IDENTIFICATION BY MASS SPECTROMETRY [LARGE SCALE ANALYSIS]</scope>
    <source>
        <tissue>Cervix carcinoma</tissue>
    </source>
</reference>
<reference key="15">
    <citation type="journal article" date="2009" name="Gene">
        <title>Splice variants of the human ZC3H14 gene generate multiple isoforms of a zinc finger polyadenosine RNA binding protein.</title>
        <authorList>
            <person name="Leung S.W."/>
            <person name="Apponi L.H."/>
            <person name="Cornejo O.E."/>
            <person name="Kitchen C.M."/>
            <person name="Valentini S.R."/>
            <person name="Pavlath G.K."/>
            <person name="Dunham C.M."/>
            <person name="Corbett A.H."/>
        </authorList>
    </citation>
    <scope>ALTERNATIVE SPLICING (ISOFORMS 1; 3; 4 AND 6)</scope>
    <scope>SUBCELLULAR LOCATION</scope>
</reference>
<reference key="16">
    <citation type="journal article" date="2009" name="Hum. Mol. Genet.">
        <title>SUT-2 potentiates tau-induced neurotoxicity in Caenorhabditis elegans.</title>
        <authorList>
            <person name="Guthrie C.R."/>
            <person name="Schellenberg G.D."/>
            <person name="Kraemer B.C."/>
        </authorList>
    </citation>
    <scope>INTERACTION WITH HOOK2</scope>
</reference>
<reference key="17">
    <citation type="journal article" date="2009" name="Sci. Signal.">
        <title>Quantitative phosphoproteomic analysis of T cell receptor signaling reveals system-wide modulation of protein-protein interactions.</title>
        <authorList>
            <person name="Mayya V."/>
            <person name="Lundgren D.H."/>
            <person name="Hwang S.-I."/>
            <person name="Rezaul K."/>
            <person name="Wu L."/>
            <person name="Eng J.K."/>
            <person name="Rodionov V."/>
            <person name="Han D.K."/>
        </authorList>
    </citation>
    <scope>PHOSPHORYLATION [LARGE SCALE ANALYSIS] AT SER-515</scope>
    <scope>IDENTIFICATION BY MASS SPECTROMETRY [LARGE SCALE ANALYSIS]</scope>
    <source>
        <tissue>Leukemic T-cell</tissue>
    </source>
</reference>
<reference key="18">
    <citation type="journal article" date="2009" name="Science">
        <title>Lysine acetylation targets protein complexes and co-regulates major cellular functions.</title>
        <authorList>
            <person name="Choudhary C."/>
            <person name="Kumar C."/>
            <person name="Gnad F."/>
            <person name="Nielsen M.L."/>
            <person name="Rehman M."/>
            <person name="Walther T.C."/>
            <person name="Olsen J.V."/>
            <person name="Mann M."/>
        </authorList>
    </citation>
    <scope>ACETYLATION [LARGE SCALE ANALYSIS] AT LYS-357</scope>
    <scope>IDENTIFICATION BY MASS SPECTROMETRY [LARGE SCALE ANALYSIS]</scope>
</reference>
<reference key="19">
    <citation type="journal article" date="2010" name="Sci. Signal.">
        <title>Quantitative phosphoproteomics reveals widespread full phosphorylation site occupancy during mitosis.</title>
        <authorList>
            <person name="Olsen J.V."/>
            <person name="Vermeulen M."/>
            <person name="Santamaria A."/>
            <person name="Kumar C."/>
            <person name="Miller M.L."/>
            <person name="Jensen L.J."/>
            <person name="Gnad F."/>
            <person name="Cox J."/>
            <person name="Jensen T.S."/>
            <person name="Nigg E.A."/>
            <person name="Brunak S."/>
            <person name="Mann M."/>
        </authorList>
    </citation>
    <scope>PHOSPHORYLATION [LARGE SCALE ANALYSIS] AT SER-515</scope>
    <scope>IDENTIFICATION BY MASS SPECTROMETRY [LARGE SCALE ANALYSIS]</scope>
    <source>
        <tissue>Cervix carcinoma</tissue>
    </source>
</reference>
<reference key="20">
    <citation type="journal article" date="2011" name="BMC Syst. Biol.">
        <title>Initial characterization of the human central proteome.</title>
        <authorList>
            <person name="Burkard T.R."/>
            <person name="Planyavsky M."/>
            <person name="Kaupe I."/>
            <person name="Breitwieser F.P."/>
            <person name="Buerckstuemmer T."/>
            <person name="Bennett K.L."/>
            <person name="Superti-Furga G."/>
            <person name="Colinge J."/>
        </authorList>
    </citation>
    <scope>IDENTIFICATION BY MASS SPECTROMETRY [LARGE SCALE ANALYSIS]</scope>
</reference>
<reference key="21">
    <citation type="journal article" date="2011" name="Proc. Natl. Acad. Sci. U.S.A.">
        <title>Mutation of the conserved polyadenosine RNA binding protein, ZC3H14/dNab2, impairs neural function in Drosophila and humans.</title>
        <authorList>
            <person name="Pak C."/>
            <person name="Garshasbi M."/>
            <person name="Kahrizi K."/>
            <person name="Gross C."/>
            <person name="Apponi L.H."/>
            <person name="Noto J.J."/>
            <person name="Kelly S.M."/>
            <person name="Leung S.W."/>
            <person name="Tzschach A."/>
            <person name="Behjati F."/>
            <person name="Abedini S.S."/>
            <person name="Mohseni M."/>
            <person name="Jensen L.R."/>
            <person name="Hu H."/>
            <person name="Huang B."/>
            <person name="Stahley S.N."/>
            <person name="Liu G."/>
            <person name="Williams K.R."/>
            <person name="Burdick S."/>
            <person name="Feng Y."/>
            <person name="Sanyal S."/>
            <person name="Bassell G.J."/>
            <person name="Ropers H.H."/>
            <person name="Najmabadi H."/>
            <person name="Corbett A.H."/>
            <person name="Moberg K.H."/>
            <person name="Kuss A.W."/>
        </authorList>
    </citation>
    <scope>INVOLVEMENT IN MRT56</scope>
    <scope>SUBCELLULAR LOCATION (ISOFORM 6)</scope>
    <scope>TISSUE SPECIFICITY (ISOFORMS 1 AND 6)</scope>
    <scope>VARIANT MRT56 154-ARG--GLU-736 DEL</scope>
</reference>
<reference key="22">
    <citation type="journal article" date="2011" name="Sci. Signal.">
        <title>System-wide temporal characterization of the proteome and phosphoproteome of human embryonic stem cell differentiation.</title>
        <authorList>
            <person name="Rigbolt K.T."/>
            <person name="Prokhorova T.A."/>
            <person name="Akimov V."/>
            <person name="Henningsen J."/>
            <person name="Johansen P.T."/>
            <person name="Kratchmarova I."/>
            <person name="Kassem M."/>
            <person name="Mann M."/>
            <person name="Olsen J.V."/>
            <person name="Blagoev B."/>
        </authorList>
    </citation>
    <scope>PHOSPHORYLATION [LARGE SCALE ANALYSIS] AT SER-515</scope>
    <scope>IDENTIFICATION BY MASS SPECTROMETRY [LARGE SCALE ANALYSIS]</scope>
</reference>
<reference key="23">
    <citation type="journal article" date="2012" name="Proc. Natl. Acad. Sci. U.S.A.">
        <title>N-terminal acetylome analyses and functional insights of the N-terminal acetyltransferase NatB.</title>
        <authorList>
            <person name="Van Damme P."/>
            <person name="Lasa M."/>
            <person name="Polevoda B."/>
            <person name="Gazquez C."/>
            <person name="Elosegui-Artola A."/>
            <person name="Kim D.S."/>
            <person name="De Juan-Pardo E."/>
            <person name="Demeyer K."/>
            <person name="Hole K."/>
            <person name="Larrea E."/>
            <person name="Timmerman E."/>
            <person name="Prieto J."/>
            <person name="Arnesen T."/>
            <person name="Sherman F."/>
            <person name="Gevaert K."/>
            <person name="Aldabe R."/>
        </authorList>
    </citation>
    <scope>ACETYLATION [LARGE SCALE ANALYSIS] AT MET-1</scope>
    <scope>IDENTIFICATION BY MASS SPECTROMETRY [LARGE SCALE ANALYSIS]</scope>
</reference>
<reference key="24">
    <citation type="journal article" date="2013" name="J. Proteome Res.">
        <title>Toward a comprehensive characterization of a human cancer cell phosphoproteome.</title>
        <authorList>
            <person name="Zhou H."/>
            <person name="Di Palma S."/>
            <person name="Preisinger C."/>
            <person name="Peng M."/>
            <person name="Polat A.N."/>
            <person name="Heck A.J."/>
            <person name="Mohammed S."/>
        </authorList>
    </citation>
    <scope>PHOSPHORYLATION [LARGE SCALE ANALYSIS] AT SER-240; SER-281; SER-327; SER-343; SER-390; SER-409; SER-421; SER-498 AND SER-515</scope>
    <scope>IDENTIFICATION BY MASS SPECTROMETRY [LARGE SCALE ANALYSIS]</scope>
    <source>
        <tissue>Cervix carcinoma</tissue>
        <tissue>Erythroleukemia</tissue>
    </source>
</reference>
<reference key="25">
    <citation type="journal article" date="2014" name="J. Proteomics">
        <title>An enzyme assisted RP-RPLC approach for in-depth analysis of human liver phosphoproteome.</title>
        <authorList>
            <person name="Bian Y."/>
            <person name="Song C."/>
            <person name="Cheng K."/>
            <person name="Dong M."/>
            <person name="Wang F."/>
            <person name="Huang J."/>
            <person name="Sun D."/>
            <person name="Wang L."/>
            <person name="Ye M."/>
            <person name="Zou H."/>
        </authorList>
    </citation>
    <scope>PHOSPHORYLATION [LARGE SCALE ANALYSIS] AT SER-343 AND SER-515</scope>
    <scope>IDENTIFICATION BY MASS SPECTROMETRY [LARGE SCALE ANALYSIS]</scope>
    <source>
        <tissue>Liver</tissue>
    </source>
</reference>
<reference key="26">
    <citation type="journal article" date="2014" name="Nat. Struct. Mol. Biol.">
        <title>Uncovering global SUMOylation signaling networks in a site-specific manner.</title>
        <authorList>
            <person name="Hendriks I.A."/>
            <person name="D'Souza R.C."/>
            <person name="Yang B."/>
            <person name="Verlaan-de Vries M."/>
            <person name="Mann M."/>
            <person name="Vertegaal A.C."/>
        </authorList>
    </citation>
    <scope>SUMOYLATION [LARGE SCALE ANALYSIS] AT LYS-175 AND LYS-413</scope>
    <scope>IDENTIFICATION BY MASS SPECTROMETRY [LARGE SCALE ANALYSIS]</scope>
</reference>
<reference key="27">
    <citation type="journal article" date="2014" name="RNA">
        <title>A conserved role for the zinc finger polyadenosine RNA binding protein, ZC3H14, in control of poly(A) tail length.</title>
        <authorList>
            <person name="Kelly S.M."/>
            <person name="Leung S.W."/>
            <person name="Pak C."/>
            <person name="Banerjee A."/>
            <person name="Moberg K.H."/>
            <person name="Corbett A.H."/>
        </authorList>
    </citation>
    <scope>FUNCTION</scope>
    <scope>SUBCELLULAR LOCATION</scope>
</reference>
<reference key="28">
    <citation type="journal article" date="2015" name="Cell Rep.">
        <title>SUMO-2 orchestrates chromatin modifiers in response to DNA damage.</title>
        <authorList>
            <person name="Hendriks I.A."/>
            <person name="Treffers L.W."/>
            <person name="Verlaan-de Vries M."/>
            <person name="Olsen J.V."/>
            <person name="Vertegaal A.C."/>
        </authorList>
    </citation>
    <scope>SUMOYLATION [LARGE SCALE ANALYSIS] AT LYS-175 AND LYS-413</scope>
    <scope>IDENTIFICATION BY MASS SPECTROMETRY [LARGE SCALE ANALYSIS]</scope>
</reference>
<reference key="29">
    <citation type="journal article" date="2015" name="Mol. Cell. Proteomics">
        <title>System-wide analysis of SUMOylation dynamics in response to replication stress reveals novel small ubiquitin-like modified target proteins and acceptor lysines relevant for genome stability.</title>
        <authorList>
            <person name="Xiao Z."/>
            <person name="Chang J.G."/>
            <person name="Hendriks I.A."/>
            <person name="Sigurdsson J.O."/>
            <person name="Olsen J.V."/>
            <person name="Vertegaal A.C."/>
        </authorList>
    </citation>
    <scope>SUMOYLATION [LARGE SCALE ANALYSIS] AT LYS-413</scope>
    <scope>IDENTIFICATION BY MASS SPECTROMETRY [LARGE SCALE ANALYSIS]</scope>
</reference>
<reference key="30">
    <citation type="journal article" date="2016" name="J. Biol. Chem.">
        <title>The Polyadenosine RNA-binding Protein, Zinc Finger Cys3His Protein 14 (ZC3H14), Regulates the Pre-mRNA Processing of a Key ATP Synthase Subunit mRNA.</title>
        <authorList>
            <person name="Wigington C.P."/>
            <person name="Morris K.J."/>
            <person name="Newman L.E."/>
            <person name="Corbett A.H."/>
        </authorList>
    </citation>
    <scope>FUNCTION</scope>
    <scope>SUBCELLULAR LOCATION</scope>
</reference>
<reference key="31">
    <citation type="journal article" date="2016" name="Mol. Cell">
        <title>Identification of a nuclear exosome decay pathway for processed transcripts.</title>
        <authorList>
            <person name="Meola N."/>
            <person name="Domanski M."/>
            <person name="Karadoulama E."/>
            <person name="Chen Y."/>
            <person name="Gentil C."/>
            <person name="Pultz D."/>
            <person name="Vitting-Seerup K."/>
            <person name="Lykke-Andersen S."/>
            <person name="Andersen J.S."/>
            <person name="Sandelin A."/>
            <person name="Jensen T.H."/>
        </authorList>
    </citation>
    <scope>INTERACTION WITH ZFC3H1</scope>
</reference>
<reference key="32">
    <citation type="journal article" date="2017" name="Nat. Struct. Mol. Biol.">
        <title>Site-specific mapping of the human SUMO proteome reveals co-modification with phosphorylation.</title>
        <authorList>
            <person name="Hendriks I.A."/>
            <person name="Lyon D."/>
            <person name="Young C."/>
            <person name="Jensen L.J."/>
            <person name="Vertegaal A.C."/>
            <person name="Nielsen M.L."/>
        </authorList>
    </citation>
    <scope>SUMOYLATION [LARGE SCALE ANALYSIS] AT LYS-99; LYS-139; LYS-175; LYS-198; LYS-245; LYS-283; LYS-295; LYS-357; LYS-378; LYS-413 AND LYS-489</scope>
    <scope>IDENTIFICATION BY MASS SPECTROMETRY [LARGE SCALE ANALYSIS]</scope>
</reference>
<reference key="33">
    <citation type="journal article" date="2024" name="Mol. Cell">
        <title>ZC3H14 facilitates backsplicing by binding to exon-intron boundary and 3' UTR.</title>
        <authorList>
            <person name="Li Q."/>
            <person name="Yang G."/>
            <person name="Ren B."/>
            <person name="Liu X."/>
            <person name="Tang L.Q."/>
            <person name="Shi Q."/>
            <person name="Shan G."/>
            <person name="Wang X."/>
        </authorList>
    </citation>
    <scope>FUNCTION</scope>
    <scope>SUBCELLULAR LOCATION</scope>
</reference>
<proteinExistence type="evidence at protein level"/>
<evidence type="ECO:0000250" key="1">
    <source>
        <dbReference type="UniProtKB" id="Q7TMD5"/>
    </source>
</evidence>
<evidence type="ECO:0000250" key="2">
    <source>
        <dbReference type="UniProtKB" id="Q8BJ05"/>
    </source>
</evidence>
<evidence type="ECO:0000255" key="3">
    <source>
        <dbReference type="PROSITE-ProRule" id="PRU00723"/>
    </source>
</evidence>
<evidence type="ECO:0000256" key="4">
    <source>
        <dbReference type="SAM" id="MobiDB-lite"/>
    </source>
</evidence>
<evidence type="ECO:0000269" key="5">
    <source>
    </source>
</evidence>
<evidence type="ECO:0000269" key="6">
    <source>
    </source>
</evidence>
<evidence type="ECO:0000269" key="7">
    <source>
    </source>
</evidence>
<evidence type="ECO:0000269" key="8">
    <source>
    </source>
</evidence>
<evidence type="ECO:0000269" key="9">
    <source>
    </source>
</evidence>
<evidence type="ECO:0000269" key="10">
    <source>
    </source>
</evidence>
<evidence type="ECO:0000269" key="11">
    <source>
    </source>
</evidence>
<evidence type="ECO:0000269" key="12">
    <source>
    </source>
</evidence>
<evidence type="ECO:0000303" key="13">
    <source>
    </source>
</evidence>
<evidence type="ECO:0000303" key="14">
    <source>
    </source>
</evidence>
<evidence type="ECO:0000303" key="15">
    <source>
    </source>
</evidence>
<evidence type="ECO:0000303" key="16">
    <source>
    </source>
</evidence>
<evidence type="ECO:0000303" key="17">
    <source>
    </source>
</evidence>
<evidence type="ECO:0000303" key="18">
    <source>
    </source>
</evidence>
<evidence type="ECO:0000303" key="19">
    <source ref="1"/>
</evidence>
<evidence type="ECO:0000303" key="20">
    <source ref="2"/>
</evidence>
<evidence type="ECO:0000303" key="21">
    <source ref="8"/>
</evidence>
<evidence type="ECO:0000305" key="22"/>
<evidence type="ECO:0000312" key="23">
    <source>
        <dbReference type="HGNC" id="HGNC:20509"/>
    </source>
</evidence>
<evidence type="ECO:0007744" key="24">
    <source>
    </source>
</evidence>
<evidence type="ECO:0007744" key="25">
    <source>
    </source>
</evidence>
<evidence type="ECO:0007744" key="26">
    <source>
    </source>
</evidence>
<evidence type="ECO:0007744" key="27">
    <source>
    </source>
</evidence>
<evidence type="ECO:0007744" key="28">
    <source>
    </source>
</evidence>
<evidence type="ECO:0007744" key="29">
    <source>
    </source>
</evidence>
<evidence type="ECO:0007744" key="30">
    <source>
    </source>
</evidence>
<evidence type="ECO:0007744" key="31">
    <source>
    </source>
</evidence>
<evidence type="ECO:0007744" key="32">
    <source>
    </source>
</evidence>
<evidence type="ECO:0007744" key="33">
    <source>
    </source>
</evidence>
<evidence type="ECO:0007744" key="34">
    <source>
    </source>
</evidence>
<evidence type="ECO:0007744" key="35">
    <source>
    </source>
</evidence>
<evidence type="ECO:0007744" key="36">
    <source>
    </source>
</evidence>